<proteinExistence type="evidence at protein level"/>
<feature type="chain" id="PRO_0000421147" description="3,5,7-trioxododecanoyl-CoA synthase">
    <location>
        <begin position="1"/>
        <end position="385"/>
    </location>
</feature>
<feature type="active site" evidence="1">
    <location>
        <position position="157"/>
    </location>
</feature>
<feature type="strand" evidence="14">
    <location>
        <begin position="10"/>
        <end position="18"/>
    </location>
</feature>
<feature type="strand" evidence="14">
    <location>
        <begin position="23"/>
        <end position="25"/>
    </location>
</feature>
<feature type="helix" evidence="14">
    <location>
        <begin position="26"/>
        <end position="28"/>
    </location>
</feature>
<feature type="helix" evidence="14">
    <location>
        <begin position="29"/>
        <end position="36"/>
    </location>
</feature>
<feature type="helix" evidence="14">
    <location>
        <begin position="43"/>
        <end position="55"/>
    </location>
</feature>
<feature type="strand" evidence="14">
    <location>
        <begin position="60"/>
        <end position="62"/>
    </location>
</feature>
<feature type="helix" evidence="14">
    <location>
        <begin position="67"/>
        <end position="72"/>
    </location>
</feature>
<feature type="helix" evidence="14">
    <location>
        <begin position="74"/>
        <end position="77"/>
    </location>
</feature>
<feature type="strand" evidence="14">
    <location>
        <begin position="78"/>
        <end position="80"/>
    </location>
</feature>
<feature type="helix" evidence="14">
    <location>
        <begin position="84"/>
        <end position="110"/>
    </location>
</feature>
<feature type="helix" evidence="14">
    <location>
        <begin position="114"/>
        <end position="116"/>
    </location>
</feature>
<feature type="strand" evidence="14">
    <location>
        <begin position="119"/>
        <end position="126"/>
    </location>
</feature>
<feature type="strand" evidence="15">
    <location>
        <begin position="129"/>
        <end position="131"/>
    </location>
</feature>
<feature type="helix" evidence="14">
    <location>
        <begin position="133"/>
        <end position="141"/>
    </location>
</feature>
<feature type="strand" evidence="14">
    <location>
        <begin position="148"/>
        <end position="154"/>
    </location>
</feature>
<feature type="helix" evidence="14">
    <location>
        <begin position="159"/>
        <end position="173"/>
    </location>
</feature>
<feature type="strand" evidence="14">
    <location>
        <begin position="179"/>
        <end position="185"/>
    </location>
</feature>
<feature type="helix" evidence="14">
    <location>
        <begin position="187"/>
        <end position="189"/>
    </location>
</feature>
<feature type="helix" evidence="14">
    <location>
        <begin position="199"/>
        <end position="207"/>
    </location>
</feature>
<feature type="strand" evidence="14">
    <location>
        <begin position="211"/>
        <end position="220"/>
    </location>
</feature>
<feature type="helix" evidence="14">
    <location>
        <begin position="223"/>
        <end position="225"/>
    </location>
</feature>
<feature type="strand" evidence="14">
    <location>
        <begin position="230"/>
        <end position="240"/>
    </location>
</feature>
<feature type="strand" evidence="14">
    <location>
        <begin position="247"/>
        <end position="253"/>
    </location>
</feature>
<feature type="strand" evidence="14">
    <location>
        <begin position="256"/>
        <end position="261"/>
    </location>
</feature>
<feature type="helix" evidence="14">
    <location>
        <begin position="265"/>
        <end position="281"/>
    </location>
</feature>
<feature type="helix" evidence="14">
    <location>
        <begin position="282"/>
        <end position="284"/>
    </location>
</feature>
<feature type="strand" evidence="14">
    <location>
        <begin position="291"/>
        <end position="296"/>
    </location>
</feature>
<feature type="helix" evidence="14">
    <location>
        <begin position="301"/>
        <end position="311"/>
    </location>
</feature>
<feature type="turn" evidence="14">
    <location>
        <begin position="315"/>
        <end position="318"/>
    </location>
</feature>
<feature type="helix" evidence="14">
    <location>
        <begin position="319"/>
        <end position="328"/>
    </location>
</feature>
<feature type="helix" evidence="14">
    <location>
        <begin position="332"/>
        <end position="334"/>
    </location>
</feature>
<feature type="helix" evidence="14">
    <location>
        <begin position="335"/>
        <end position="349"/>
    </location>
</feature>
<feature type="turn" evidence="14">
    <location>
        <begin position="355"/>
        <end position="358"/>
    </location>
</feature>
<feature type="strand" evidence="14">
    <location>
        <begin position="360"/>
        <end position="368"/>
    </location>
</feature>
<feature type="turn" evidence="14">
    <location>
        <begin position="369"/>
        <end position="371"/>
    </location>
</feature>
<feature type="strand" evidence="14">
    <location>
        <begin position="372"/>
        <end position="380"/>
    </location>
</feature>
<organism>
    <name type="scientific">Cannabis sativa</name>
    <name type="common">Hemp</name>
    <name type="synonym">Marijuana</name>
    <dbReference type="NCBI Taxonomy" id="3483"/>
    <lineage>
        <taxon>Eukaryota</taxon>
        <taxon>Viridiplantae</taxon>
        <taxon>Streptophyta</taxon>
        <taxon>Embryophyta</taxon>
        <taxon>Tracheophyta</taxon>
        <taxon>Spermatophyta</taxon>
        <taxon>Magnoliopsida</taxon>
        <taxon>eudicotyledons</taxon>
        <taxon>Gunneridae</taxon>
        <taxon>Pentapetalae</taxon>
        <taxon>rosids</taxon>
        <taxon>fabids</taxon>
        <taxon>Rosales</taxon>
        <taxon>Cannabaceae</taxon>
        <taxon>Cannabis</taxon>
    </lineage>
</organism>
<sequence>MNHLRAEGPASVLAIGTANPENILLQDEFPDYYFRVTKSEHMTQLKEKFRKICDKSMIRKRNCFLNEEHLKQNPRLVEHEMQTLDARQDMLVVEVPKLGKDACAKAIKEWGQPKSKITHLIFTSASTTDMPGADYHCAKLLGLSPSVKRVMMYQLGCYGGGTVLRIAKDIAENNKGARVLAVCCDIMACLFRGPSESDLELLVGQAIFGDGAAAVIVGAEPDESVGERPIFELVSTGQTILPNSEGTIGGHIREAGLIFDLHKDVPMLISNNIEKCLIEAFTPIGISDWNSIFWITHPGGKAILDKVEEKLHLKSDKFVDSRHVLSEHGNMSSSTVLFVMDELRKRSLEEGKSTTGDGFEWGVLFGFGPGLTVERVVVRSVPIKY</sequence>
<name>OLIS_CANSA</name>
<gene>
    <name evidence="9" type="primary">OLS</name>
    <name evidence="10" type="synonym">CAN24</name>
    <name evidence="8" type="synonym">PKS-1</name>
    <name evidence="11" type="synonym">TKS</name>
</gene>
<accession>B1Q2B6</accession>
<protein>
    <recommendedName>
        <fullName>3,5,7-trioxododecanoyl-CoA synthase</fullName>
        <ecNumber evidence="4 5 7">2.3.1.206</ecNumber>
    </recommendedName>
    <alternativeName>
        <fullName evidence="9">Olivetol synthase</fullName>
        <ecNumber evidence="4 7">4.4.1.-</ecNumber>
    </alternativeName>
    <alternativeName>
        <fullName evidence="8">Polyketide synthase-1</fullName>
    </alternativeName>
    <alternativeName>
        <fullName evidence="11">Tetraketide synthase</fullName>
    </alternativeName>
</protein>
<keyword id="KW-0002">3D-structure</keyword>
<keyword id="KW-0012">Acyltransferase</keyword>
<keyword id="KW-0456">Lyase</keyword>
<keyword id="KW-0808">Transferase</keyword>
<evidence type="ECO:0000255" key="1">
    <source>
        <dbReference type="PROSITE-ProRule" id="PRU10023"/>
    </source>
</evidence>
<evidence type="ECO:0000269" key="2">
    <source>
    </source>
</evidence>
<evidence type="ECO:0000269" key="3">
    <source>
    </source>
</evidence>
<evidence type="ECO:0000269" key="4">
    <source>
    </source>
</evidence>
<evidence type="ECO:0000269" key="5">
    <source>
    </source>
</evidence>
<evidence type="ECO:0000269" key="6">
    <source>
    </source>
</evidence>
<evidence type="ECO:0000269" key="7">
    <source ref="3"/>
</evidence>
<evidence type="ECO:0000303" key="8">
    <source>
    </source>
</evidence>
<evidence type="ECO:0000303" key="9">
    <source>
    </source>
</evidence>
<evidence type="ECO:0000303" key="10">
    <source>
    </source>
</evidence>
<evidence type="ECO:0000303" key="11">
    <source>
    </source>
</evidence>
<evidence type="ECO:0000303" key="12">
    <source>
    </source>
</evidence>
<evidence type="ECO:0000305" key="13"/>
<evidence type="ECO:0007829" key="14">
    <source>
        <dbReference type="PDB" id="6GW3"/>
    </source>
</evidence>
<evidence type="ECO:0007829" key="15">
    <source>
        <dbReference type="PDB" id="7W6G"/>
    </source>
</evidence>
<dbReference type="EC" id="2.3.1.206" evidence="4 5 7"/>
<dbReference type="EC" id="4.4.1.-" evidence="4 7"/>
<dbReference type="EMBL" id="AB164375">
    <property type="protein sequence ID" value="BAG14339.1"/>
    <property type="molecule type" value="mRNA"/>
</dbReference>
<dbReference type="PDB" id="6GW3">
    <property type="method" value="X-ray"/>
    <property type="resolution" value="1.39 A"/>
    <property type="chains" value="A/B/C/D=2-385, D=2-99"/>
</dbReference>
<dbReference type="PDB" id="7W6G">
    <property type="method" value="X-ray"/>
    <property type="resolution" value="2.10 A"/>
    <property type="chains" value="A/B/C/D=1-385"/>
</dbReference>
<dbReference type="PDBsum" id="6GW3"/>
<dbReference type="PDBsum" id="7W6G"/>
<dbReference type="SMR" id="B1Q2B6"/>
<dbReference type="KEGG" id="ag:BAG14339"/>
<dbReference type="BRENDA" id="2.3.1.206">
    <property type="organism ID" value="1159"/>
</dbReference>
<dbReference type="SABIO-RK" id="B1Q2B6"/>
<dbReference type="UniPathway" id="UPA00213"/>
<dbReference type="Proteomes" id="UP000596661">
    <property type="component" value="Unplaced"/>
</dbReference>
<dbReference type="GO" id="GO:0016747">
    <property type="term" value="F:acyltransferase activity, transferring groups other than amino-acyl groups"/>
    <property type="evidence" value="ECO:0007669"/>
    <property type="project" value="InterPro"/>
</dbReference>
<dbReference type="GO" id="GO:0016829">
    <property type="term" value="F:lyase activity"/>
    <property type="evidence" value="ECO:0007669"/>
    <property type="project" value="UniProtKB-KW"/>
</dbReference>
<dbReference type="GO" id="GO:1901696">
    <property type="term" value="P:cannabinoid biosynthetic process"/>
    <property type="evidence" value="ECO:0000304"/>
    <property type="project" value="UniProtKB"/>
</dbReference>
<dbReference type="GO" id="GO:0030639">
    <property type="term" value="P:polyketide biosynthetic process"/>
    <property type="evidence" value="ECO:0007669"/>
    <property type="project" value="TreeGrafter"/>
</dbReference>
<dbReference type="GO" id="GO:0016114">
    <property type="term" value="P:terpenoid biosynthetic process"/>
    <property type="evidence" value="ECO:0007669"/>
    <property type="project" value="UniProtKB-UniPathway"/>
</dbReference>
<dbReference type="CDD" id="cd00831">
    <property type="entry name" value="CHS_like"/>
    <property type="match status" value="1"/>
</dbReference>
<dbReference type="FunFam" id="3.40.47.10:FF:000014">
    <property type="entry name" value="Chalcone synthase 1"/>
    <property type="match status" value="1"/>
</dbReference>
<dbReference type="FunFam" id="3.40.47.10:FF:000025">
    <property type="entry name" value="Chalcone synthase 2"/>
    <property type="match status" value="1"/>
</dbReference>
<dbReference type="Gene3D" id="3.40.47.10">
    <property type="match status" value="2"/>
</dbReference>
<dbReference type="InterPro" id="IPR012328">
    <property type="entry name" value="Chalcone/stilbene_synt_C"/>
</dbReference>
<dbReference type="InterPro" id="IPR001099">
    <property type="entry name" value="Chalcone/stilbene_synt_N"/>
</dbReference>
<dbReference type="InterPro" id="IPR018088">
    <property type="entry name" value="Chalcone/stilbene_synthase_AS"/>
</dbReference>
<dbReference type="InterPro" id="IPR011141">
    <property type="entry name" value="Polyketide_synthase_type-III"/>
</dbReference>
<dbReference type="InterPro" id="IPR016039">
    <property type="entry name" value="Thiolase-like"/>
</dbReference>
<dbReference type="PANTHER" id="PTHR11877:SF14">
    <property type="entry name" value="CHALCONE SYNTHASE"/>
    <property type="match status" value="1"/>
</dbReference>
<dbReference type="PANTHER" id="PTHR11877">
    <property type="entry name" value="HYDROXYMETHYLGLUTARYL-COA SYNTHASE"/>
    <property type="match status" value="1"/>
</dbReference>
<dbReference type="Pfam" id="PF02797">
    <property type="entry name" value="Chal_sti_synt_C"/>
    <property type="match status" value="1"/>
</dbReference>
<dbReference type="Pfam" id="PF00195">
    <property type="entry name" value="Chal_sti_synt_N"/>
    <property type="match status" value="1"/>
</dbReference>
<dbReference type="PIRSF" id="PIRSF000451">
    <property type="entry name" value="PKS_III"/>
    <property type="match status" value="1"/>
</dbReference>
<dbReference type="SUPFAM" id="SSF53901">
    <property type="entry name" value="Thiolase-like"/>
    <property type="match status" value="2"/>
</dbReference>
<dbReference type="PROSITE" id="PS00441">
    <property type="entry name" value="CHALCONE_SYNTH"/>
    <property type="match status" value="1"/>
</dbReference>
<reference key="1">
    <citation type="journal article" date="2009" name="FEBS Lett.">
        <title>Characterization of olivetol synthase, a polyketide synthase putatively involved in cannabinoid biosynthetic pathway.</title>
        <authorList>
            <person name="Taura F."/>
            <person name="Tanaka S."/>
            <person name="Taguchi C."/>
            <person name="Fukamizu T."/>
            <person name="Tanaka H."/>
            <person name="Shoyama Y."/>
            <person name="Morimoto S."/>
        </authorList>
    </citation>
    <scope>NUCLEOTIDE SEQUENCE [MRNA]</scope>
    <scope>FUNCTION</scope>
    <scope>CATALYTIC ACTIVITY</scope>
    <scope>SUBSTRATE SPECIFICITY</scope>
    <scope>BIOPHYSICOCHEMICAL PROPERTIES</scope>
    <scope>TISSUE SPECIFICITY</scope>
</reference>
<reference key="2">
    <citation type="journal article" date="2008" name="Acta Crystallogr. F">
        <title>Crystallization and preliminary X-ray diffraction studies of polyketide synthase-1 (PKS-1) from Cannabis sativa.</title>
        <authorList>
            <person name="Taguchi C."/>
            <person name="Taura F."/>
            <person name="Tamada T."/>
            <person name="Shoyama Y."/>
            <person name="Shoyama Y."/>
            <person name="Tanaka H."/>
            <person name="Kuroki R."/>
            <person name="Morimoto S."/>
        </authorList>
    </citation>
    <scope>FUNCTION</scope>
    <scope>CRYSTALLIZATION</scope>
</reference>
<reference key="3">
    <citation type="journal article" date="2004" name="Plant Sci.">
        <title>Olivetol as product of a polyketide synthase in Cannabis sativa L.</title>
        <authorList>
            <person name="Raharjo T.J."/>
            <person name="Chang W.-T."/>
            <person name="Choi Y.H."/>
            <person name="Peltenburg-Looman A.M.G."/>
            <person name="Verpoorte R."/>
        </authorList>
    </citation>
    <scope>FUNCTION</scope>
    <scope>CATALYTIC ACTIVITY</scope>
    <scope>TISSUE SPECIFICITY</scope>
</reference>
<reference key="4">
    <citation type="journal article" date="2007" name="Chem. Biodivers.">
        <title>Phytocannabinoids in Cannabis sativa: recent studies on biosynthetic enzymes.</title>
        <authorList>
            <person name="Taura F."/>
            <person name="Sirikantaramas S."/>
            <person name="Shoyama Y."/>
            <person name="Shoyama Y."/>
            <person name="Morimoto S."/>
        </authorList>
    </citation>
    <scope>REVIEW</scope>
</reference>
<reference key="5">
    <citation type="journal article" date="2008" name="Plant Cell Physiol.">
        <title>PKS activities and biosynthesis of cannabinoids and flavonoids in Cannabis sativa L. plants.</title>
        <authorList>
            <person name="Flores-Sanchez I.J."/>
            <person name="Verpoorte R."/>
        </authorList>
    </citation>
    <scope>TISSUE SPECIFICITY</scope>
</reference>
<reference key="6">
    <citation type="journal article" date="2009" name="J. Exp. Bot.">
        <title>Identification of candidate genes affecting Delta9-tetrahydrocannabinol biosynthesis in Cannabis sativa.</title>
        <authorList>
            <person name="Marks M.D."/>
            <person name="Tian L."/>
            <person name="Wenger J.P."/>
            <person name="Omburo S.N."/>
            <person name="Soto-Fuentes W."/>
            <person name="He J."/>
            <person name="Gang D.R."/>
            <person name="Weiblen G.D."/>
            <person name="Dixon R.A."/>
        </authorList>
    </citation>
    <scope>CATALYTIC ACTIVITY</scope>
    <scope>SUBSTRATE SPECIFICITY</scope>
</reference>
<reference key="7">
    <citation type="journal article" date="2012" name="Proc. Natl. Acad. Sci. U.S.A.">
        <title>Identification of olivetolic acid cyclase from Cannabis sativa reveals a unique catalytic route to plant polyketides.</title>
        <authorList>
            <person name="Gagne S.J."/>
            <person name="Stout J.M."/>
            <person name="Liu E."/>
            <person name="Boubakir Z."/>
            <person name="Clark S.M."/>
            <person name="Page J.E."/>
        </authorList>
    </citation>
    <scope>FUNCTION</scope>
    <scope>NOMENCLATURE</scope>
    <source>
        <strain>cv. Finola</strain>
    </source>
</reference>
<reference key="8">
    <citation type="journal article" date="2019" name="Nat. Prod. Rep.">
        <title>Non-volatile natural products in plant glandular trichomes: chemistry, biological activities and biosynthesis.</title>
        <authorList>
            <person name="Liu Y."/>
            <person name="Jing S.-X."/>
            <person name="Luo S.-H."/>
            <person name="Li S.-H."/>
        </authorList>
    </citation>
    <scope>PATHWAY</scope>
    <scope>REVIEW</scope>
</reference>
<reference key="9">
    <citation type="submission" date="2018-06" db="PDB data bank">
        <title>Structure of a PKS class III from Cannabis sativa.</title>
        <authorList>
            <person name="Kearsey L."/>
            <person name="Karuppiah V."/>
            <person name="Leys D."/>
            <person name="Takano E."/>
            <person name="Scrutton N.S."/>
        </authorList>
    </citation>
    <scope>X-RAY CRYSTALLOGRAPHY (1.39 ANGSTROMS) OF 2-385 AND 2-99</scope>
</reference>
<comment type="function">
    <text evidence="2 4 5 6 7">Involved in the biosynthesis of cannabinoids-related terpenophenolic natural products, which have pharmacological activity (PubMed:18323613, PubMed:19454282, PubMed:19581347, PubMed:22802619). Polyketide synthase responsible for olivetol biosynthesis, from a C(12)-polyketide, probably 3,5,7-trioxododecanoyl-CoA (PubMed:19454282, Ref.3). Catalyzes the first step in the cannabinoids biosynthetic pathway. The preferred substrate is hexanoyl-CoA, but also accepts CoA esters with C4 to C8 aliphatic side chains (PubMed:19454282). When using malonyl-CoA and hexanoyl-CoA as substrates, produces undetermined compounds distinct form olivetol or olivetolic acid (PubMed:19581347) that could be hexanoyl triacetic acid lactone (HTAL) (PubMed:18323613) and pentyl diacetic acid lactone (PDAL) (PubMed:22802619). Produces olivetolic acid when acting in concert with olivetolic acid cyclase (OAC).</text>
</comment>
<comment type="catalytic activity">
    <reaction evidence="4 5 7">
        <text>hexanoyl-CoA + 3 malonyl-CoA + 3 H(+) = 3,5,7-trioxododecanoyl-CoA + 3 CO2 + 3 CoA</text>
        <dbReference type="Rhea" id="RHEA:34119"/>
        <dbReference type="ChEBI" id="CHEBI:15378"/>
        <dbReference type="ChEBI" id="CHEBI:16526"/>
        <dbReference type="ChEBI" id="CHEBI:57287"/>
        <dbReference type="ChEBI" id="CHEBI:57384"/>
        <dbReference type="ChEBI" id="CHEBI:62620"/>
        <dbReference type="ChEBI" id="CHEBI:66957"/>
        <dbReference type="EC" id="2.3.1.206"/>
    </reaction>
    <physiologicalReaction direction="left-to-right" evidence="4 5 7">
        <dbReference type="Rhea" id="RHEA:34120"/>
    </physiologicalReaction>
</comment>
<comment type="catalytic activity">
    <reaction evidence="4 7">
        <text>3,5,7-trioxododecanoyl-CoA = olivetol + CO2 + CoA</text>
        <dbReference type="Rhea" id="RHEA:20261"/>
        <dbReference type="ChEBI" id="CHEBI:16526"/>
        <dbReference type="ChEBI" id="CHEBI:57287"/>
        <dbReference type="ChEBI" id="CHEBI:66957"/>
        <dbReference type="ChEBI" id="CHEBI:66960"/>
    </reaction>
    <physiologicalReaction direction="left-to-right" evidence="4 7">
        <dbReference type="Rhea" id="RHEA:20262"/>
    </physiologicalReaction>
</comment>
<comment type="biophysicochemical properties">
    <kinetics>
        <KM evidence="4">60.8 uM for hexanoyl-CoA</KM>
        <KM evidence="4">88.9 uM for butyryl-CoA</KM>
        <KM evidence="4">99.1 uM for isovaleryl-CoA</KM>
        <KM evidence="4">81.7 uM for octanoyl-CoA</KM>
        <text evidence="4">kcat is 2.96 min(-1) with hexanoyl-CoA as substrate (PubMed:19454282). kcat is 0.719 min(-1) with butyryl-CoA as substrate (PubMed:19454282). kcat is 0.585 min(-1) with isovaleryl-CoA as substrate (PubMed:19454282). kcat is 0.525 min(-1) with octanoyl-CoA as substrate (PubMed:19454282).</text>
    </kinetics>
</comment>
<comment type="pathway">
    <text evidence="12">Secondary metabolite biosynthesis; terpenoid biosynthesis.</text>
</comment>
<comment type="tissue specificity">
    <text evidence="3 4 7">Expressed in bracts, flowers and young leaves. Not detected in mature leaves, roots and stems. Expressed in glandular trichomes.</text>
</comment>
<comment type="polymorphism">
    <text>Several isoforms exist due to polymorphism.</text>
</comment>
<comment type="similarity">
    <text evidence="13">Belongs to the thiolase-like superfamily. Chalcone/stilbene synthases family.</text>
</comment>